<comment type="catalytic activity">
    <reaction evidence="1">
        <text>tRNA(His) + L-histidine + ATP = L-histidyl-tRNA(His) + AMP + diphosphate + H(+)</text>
        <dbReference type="Rhea" id="RHEA:17313"/>
        <dbReference type="Rhea" id="RHEA-COMP:9665"/>
        <dbReference type="Rhea" id="RHEA-COMP:9689"/>
        <dbReference type="ChEBI" id="CHEBI:15378"/>
        <dbReference type="ChEBI" id="CHEBI:30616"/>
        <dbReference type="ChEBI" id="CHEBI:33019"/>
        <dbReference type="ChEBI" id="CHEBI:57595"/>
        <dbReference type="ChEBI" id="CHEBI:78442"/>
        <dbReference type="ChEBI" id="CHEBI:78527"/>
        <dbReference type="ChEBI" id="CHEBI:456215"/>
        <dbReference type="EC" id="6.1.1.21"/>
    </reaction>
</comment>
<comment type="subunit">
    <text evidence="1">Homodimer.</text>
</comment>
<comment type="subcellular location">
    <subcellularLocation>
        <location evidence="1">Cytoplasm</location>
    </subcellularLocation>
</comment>
<comment type="similarity">
    <text evidence="1">Belongs to the class-II aminoacyl-tRNA synthetase family.</text>
</comment>
<evidence type="ECO:0000255" key="1">
    <source>
        <dbReference type="HAMAP-Rule" id="MF_00127"/>
    </source>
</evidence>
<feature type="chain" id="PRO_1000095585" description="Histidine--tRNA ligase">
    <location>
        <begin position="1"/>
        <end position="424"/>
    </location>
</feature>
<sequence>MAKNIQAIRGMNDYLPGETAIWQRIEGTLKNVLGSYGYSEIRLPIVEQTPLFKRAIGEVTDVVEKEMYTFEDRNGDSLTLRPEGTAGCVRAGIEHGLLYNQEQRLWYIGPMFRHERPQKGRYRQFHQLGAEVFGLQGPDIDAELIMLTARWWRALGISEHVSLELNSIGSLEARANYRDALVAFLEQHQETLDEDCKRRMYTNPLRVLDSKNPDVQALLNDAPALGDYLDDDSREHFAGLCKLLDAAGIAYTVNQRLVRGLDYYNRTVFEWVTNSLGSQGTVCAGGRYDGLVEQLGGRATPAVGFAMGLERLVLLVQAVNPEFIASPVVDIYLVAAGAQTQSAAMTLAERLRDEMPGVKLMTNHGGGNFKKQFARADKWGARIALVLGESEVADGTVVVKDLRSGEQTAVAQDSVAAHLRTLLG</sequence>
<reference key="1">
    <citation type="journal article" date="2011" name="J. Bacteriol.">
        <title>Comparative genomics of 28 Salmonella enterica isolates: evidence for CRISPR-mediated adaptive sublineage evolution.</title>
        <authorList>
            <person name="Fricke W.F."/>
            <person name="Mammel M.K."/>
            <person name="McDermott P.F."/>
            <person name="Tartera C."/>
            <person name="White D.G."/>
            <person name="Leclerc J.E."/>
            <person name="Ravel J."/>
            <person name="Cebula T.A."/>
        </authorList>
    </citation>
    <scope>NUCLEOTIDE SEQUENCE [LARGE SCALE GENOMIC DNA]</scope>
    <source>
        <strain>CT_02021853</strain>
    </source>
</reference>
<proteinExistence type="inferred from homology"/>
<protein>
    <recommendedName>
        <fullName evidence="1">Histidine--tRNA ligase</fullName>
        <ecNumber evidence="1">6.1.1.21</ecNumber>
    </recommendedName>
    <alternativeName>
        <fullName evidence="1">Histidyl-tRNA synthetase</fullName>
        <shortName evidence="1">HisRS</shortName>
    </alternativeName>
</protein>
<name>SYH_SALDC</name>
<organism>
    <name type="scientific">Salmonella dublin (strain CT_02021853)</name>
    <dbReference type="NCBI Taxonomy" id="439851"/>
    <lineage>
        <taxon>Bacteria</taxon>
        <taxon>Pseudomonadati</taxon>
        <taxon>Pseudomonadota</taxon>
        <taxon>Gammaproteobacteria</taxon>
        <taxon>Enterobacterales</taxon>
        <taxon>Enterobacteriaceae</taxon>
        <taxon>Salmonella</taxon>
    </lineage>
</organism>
<gene>
    <name evidence="1" type="primary">hisS</name>
    <name type="ordered locus">SeD_A2890</name>
</gene>
<keyword id="KW-0030">Aminoacyl-tRNA synthetase</keyword>
<keyword id="KW-0067">ATP-binding</keyword>
<keyword id="KW-0963">Cytoplasm</keyword>
<keyword id="KW-0436">Ligase</keyword>
<keyword id="KW-0547">Nucleotide-binding</keyword>
<keyword id="KW-0648">Protein biosynthesis</keyword>
<accession>B5FR62</accession>
<dbReference type="EC" id="6.1.1.21" evidence="1"/>
<dbReference type="EMBL" id="CP001144">
    <property type="protein sequence ID" value="ACH73688.1"/>
    <property type="molecule type" value="Genomic_DNA"/>
</dbReference>
<dbReference type="RefSeq" id="WP_001107146.1">
    <property type="nucleotide sequence ID" value="NC_011205.1"/>
</dbReference>
<dbReference type="SMR" id="B5FR62"/>
<dbReference type="KEGG" id="sed:SeD_A2890"/>
<dbReference type="HOGENOM" id="CLU_025113_1_1_6"/>
<dbReference type="Proteomes" id="UP000008322">
    <property type="component" value="Chromosome"/>
</dbReference>
<dbReference type="GO" id="GO:0005737">
    <property type="term" value="C:cytoplasm"/>
    <property type="evidence" value="ECO:0007669"/>
    <property type="project" value="UniProtKB-SubCell"/>
</dbReference>
<dbReference type="GO" id="GO:0005524">
    <property type="term" value="F:ATP binding"/>
    <property type="evidence" value="ECO:0007669"/>
    <property type="project" value="UniProtKB-UniRule"/>
</dbReference>
<dbReference type="GO" id="GO:0004821">
    <property type="term" value="F:histidine-tRNA ligase activity"/>
    <property type="evidence" value="ECO:0007669"/>
    <property type="project" value="UniProtKB-UniRule"/>
</dbReference>
<dbReference type="GO" id="GO:0006427">
    <property type="term" value="P:histidyl-tRNA aminoacylation"/>
    <property type="evidence" value="ECO:0007669"/>
    <property type="project" value="UniProtKB-UniRule"/>
</dbReference>
<dbReference type="CDD" id="cd00773">
    <property type="entry name" value="HisRS-like_core"/>
    <property type="match status" value="1"/>
</dbReference>
<dbReference type="CDD" id="cd00859">
    <property type="entry name" value="HisRS_anticodon"/>
    <property type="match status" value="1"/>
</dbReference>
<dbReference type="FunFam" id="3.30.930.10:FF:000005">
    <property type="entry name" value="Histidine--tRNA ligase"/>
    <property type="match status" value="1"/>
</dbReference>
<dbReference type="FunFam" id="3.40.50.800:FF:000007">
    <property type="entry name" value="Histidine--tRNA ligase"/>
    <property type="match status" value="1"/>
</dbReference>
<dbReference type="Gene3D" id="3.40.50.800">
    <property type="entry name" value="Anticodon-binding domain"/>
    <property type="match status" value="1"/>
</dbReference>
<dbReference type="Gene3D" id="3.30.930.10">
    <property type="entry name" value="Bira Bifunctional Protein, Domain 2"/>
    <property type="match status" value="1"/>
</dbReference>
<dbReference type="HAMAP" id="MF_00127">
    <property type="entry name" value="His_tRNA_synth"/>
    <property type="match status" value="1"/>
</dbReference>
<dbReference type="InterPro" id="IPR006195">
    <property type="entry name" value="aa-tRNA-synth_II"/>
</dbReference>
<dbReference type="InterPro" id="IPR045864">
    <property type="entry name" value="aa-tRNA-synth_II/BPL/LPL"/>
</dbReference>
<dbReference type="InterPro" id="IPR004154">
    <property type="entry name" value="Anticodon-bd"/>
</dbReference>
<dbReference type="InterPro" id="IPR036621">
    <property type="entry name" value="Anticodon-bd_dom_sf"/>
</dbReference>
<dbReference type="InterPro" id="IPR015807">
    <property type="entry name" value="His-tRNA-ligase"/>
</dbReference>
<dbReference type="InterPro" id="IPR041715">
    <property type="entry name" value="HisRS-like_core"/>
</dbReference>
<dbReference type="InterPro" id="IPR004516">
    <property type="entry name" value="HisRS/HisZ"/>
</dbReference>
<dbReference type="InterPro" id="IPR033656">
    <property type="entry name" value="HisRS_anticodon"/>
</dbReference>
<dbReference type="NCBIfam" id="TIGR00442">
    <property type="entry name" value="hisS"/>
    <property type="match status" value="1"/>
</dbReference>
<dbReference type="PANTHER" id="PTHR43707:SF1">
    <property type="entry name" value="HISTIDINE--TRNA LIGASE, MITOCHONDRIAL-RELATED"/>
    <property type="match status" value="1"/>
</dbReference>
<dbReference type="PANTHER" id="PTHR43707">
    <property type="entry name" value="HISTIDYL-TRNA SYNTHETASE"/>
    <property type="match status" value="1"/>
</dbReference>
<dbReference type="Pfam" id="PF03129">
    <property type="entry name" value="HGTP_anticodon"/>
    <property type="match status" value="1"/>
</dbReference>
<dbReference type="Pfam" id="PF13393">
    <property type="entry name" value="tRNA-synt_His"/>
    <property type="match status" value="1"/>
</dbReference>
<dbReference type="PIRSF" id="PIRSF001549">
    <property type="entry name" value="His-tRNA_synth"/>
    <property type="match status" value="1"/>
</dbReference>
<dbReference type="SUPFAM" id="SSF52954">
    <property type="entry name" value="Class II aaRS ABD-related"/>
    <property type="match status" value="1"/>
</dbReference>
<dbReference type="SUPFAM" id="SSF55681">
    <property type="entry name" value="Class II aaRS and biotin synthetases"/>
    <property type="match status" value="1"/>
</dbReference>
<dbReference type="PROSITE" id="PS50862">
    <property type="entry name" value="AA_TRNA_LIGASE_II"/>
    <property type="match status" value="1"/>
</dbReference>